<feature type="chain" id="PRO_0000063492" description="Chaperonin GroEL 2">
    <location>
        <begin position="1"/>
        <end position="542"/>
    </location>
</feature>
<feature type="binding site" evidence="1">
    <location>
        <begin position="30"/>
        <end position="33"/>
    </location>
    <ligand>
        <name>ATP</name>
        <dbReference type="ChEBI" id="CHEBI:30616"/>
    </ligand>
</feature>
<feature type="binding site" evidence="1">
    <location>
        <position position="51"/>
    </location>
    <ligand>
        <name>ATP</name>
        <dbReference type="ChEBI" id="CHEBI:30616"/>
    </ligand>
</feature>
<feature type="binding site" evidence="1">
    <location>
        <begin position="87"/>
        <end position="91"/>
    </location>
    <ligand>
        <name>ATP</name>
        <dbReference type="ChEBI" id="CHEBI:30616"/>
    </ligand>
</feature>
<feature type="binding site" evidence="1">
    <location>
        <position position="415"/>
    </location>
    <ligand>
        <name>ATP</name>
        <dbReference type="ChEBI" id="CHEBI:30616"/>
    </ligand>
</feature>
<feature type="binding site" evidence="1">
    <location>
        <position position="496"/>
    </location>
    <ligand>
        <name>ATP</name>
        <dbReference type="ChEBI" id="CHEBI:30616"/>
    </ligand>
</feature>
<sequence>MAAKEIKFSTEAREKMLRGVDILANAVKATLGPKGRNVVIDKSFGAPRITKDGVSVAKEIELEDKFENMGAQMVREVASKTSDIAGDGTTTATVLAQAIVKEGAKAVTSGMNPMDLKRGIDLAVAAIVAELKANARKISNNSEIAQVGTISANGDAEIGRFLAEAMEKVGNDGVITVEEAKTAETELEVVEGMQFDRGYLSPYFVTNADKMRVEFEDPYILIHEKKLSNLQSMLPVLEAVVQSSKPLLIIAEDVEGEALATLVVNKLRGGLKIAAVKAPGFGDRRKAMLEDIAILTAGTVISEDLGIKLESVTLDMLGRAKKVSIEKENTTIVDGSGAKTDIEGRVAQIKAQIEETTSDYDREKLQERLAKLAGGVAVIRVGGSTEVEVKEKKDRVDDALHATRAAVEEGILPGGGVALLRAVKALDAVKTANGDQRVGVDIVRRAVEAPARQIAENAGAEGSVIVGKLREKSEFSYGWNAQTGEYGDLYAQGVIDPAKVVRTALQDAASIAGLLVTTEAMIAEKPKKDAPPPMPAGPGMDF</sequence>
<dbReference type="EC" id="5.6.1.7" evidence="1"/>
<dbReference type="EMBL" id="AF239163">
    <property type="protein sequence ID" value="AAF64160.1"/>
    <property type="molecule type" value="Genomic_DNA"/>
</dbReference>
<dbReference type="SMR" id="Q9L691"/>
<dbReference type="eggNOG" id="COG0459">
    <property type="taxonomic scope" value="Bacteria"/>
</dbReference>
<dbReference type="GO" id="GO:0005737">
    <property type="term" value="C:cytoplasm"/>
    <property type="evidence" value="ECO:0007669"/>
    <property type="project" value="UniProtKB-SubCell"/>
</dbReference>
<dbReference type="GO" id="GO:0005524">
    <property type="term" value="F:ATP binding"/>
    <property type="evidence" value="ECO:0007669"/>
    <property type="project" value="UniProtKB-UniRule"/>
</dbReference>
<dbReference type="GO" id="GO:0140662">
    <property type="term" value="F:ATP-dependent protein folding chaperone"/>
    <property type="evidence" value="ECO:0007669"/>
    <property type="project" value="InterPro"/>
</dbReference>
<dbReference type="GO" id="GO:0016853">
    <property type="term" value="F:isomerase activity"/>
    <property type="evidence" value="ECO:0007669"/>
    <property type="project" value="UniProtKB-KW"/>
</dbReference>
<dbReference type="GO" id="GO:0051082">
    <property type="term" value="F:unfolded protein binding"/>
    <property type="evidence" value="ECO:0007669"/>
    <property type="project" value="UniProtKB-UniRule"/>
</dbReference>
<dbReference type="GO" id="GO:0042026">
    <property type="term" value="P:protein refolding"/>
    <property type="evidence" value="ECO:0007669"/>
    <property type="project" value="UniProtKB-UniRule"/>
</dbReference>
<dbReference type="CDD" id="cd03344">
    <property type="entry name" value="GroEL"/>
    <property type="match status" value="1"/>
</dbReference>
<dbReference type="FunFam" id="1.10.560.10:FF:000001">
    <property type="entry name" value="60 kDa chaperonin"/>
    <property type="match status" value="1"/>
</dbReference>
<dbReference type="FunFam" id="3.50.7.10:FF:000001">
    <property type="entry name" value="60 kDa chaperonin"/>
    <property type="match status" value="1"/>
</dbReference>
<dbReference type="Gene3D" id="3.50.7.10">
    <property type="entry name" value="GroEL"/>
    <property type="match status" value="1"/>
</dbReference>
<dbReference type="Gene3D" id="1.10.560.10">
    <property type="entry name" value="GroEL-like equatorial domain"/>
    <property type="match status" value="1"/>
</dbReference>
<dbReference type="Gene3D" id="3.30.260.10">
    <property type="entry name" value="TCP-1-like chaperonin intermediate domain"/>
    <property type="match status" value="1"/>
</dbReference>
<dbReference type="HAMAP" id="MF_00600">
    <property type="entry name" value="CH60"/>
    <property type="match status" value="1"/>
</dbReference>
<dbReference type="InterPro" id="IPR018370">
    <property type="entry name" value="Chaperonin_Cpn60_CS"/>
</dbReference>
<dbReference type="InterPro" id="IPR001844">
    <property type="entry name" value="Cpn60/GroEL"/>
</dbReference>
<dbReference type="InterPro" id="IPR002423">
    <property type="entry name" value="Cpn60/GroEL/TCP-1"/>
</dbReference>
<dbReference type="InterPro" id="IPR027409">
    <property type="entry name" value="GroEL-like_apical_dom_sf"/>
</dbReference>
<dbReference type="InterPro" id="IPR027413">
    <property type="entry name" value="GROEL-like_equatorial_sf"/>
</dbReference>
<dbReference type="InterPro" id="IPR027410">
    <property type="entry name" value="TCP-1-like_intermed_sf"/>
</dbReference>
<dbReference type="NCBIfam" id="TIGR02348">
    <property type="entry name" value="GroEL"/>
    <property type="match status" value="1"/>
</dbReference>
<dbReference type="NCBIfam" id="NF000592">
    <property type="entry name" value="PRK00013.1"/>
    <property type="match status" value="1"/>
</dbReference>
<dbReference type="NCBIfam" id="NF009487">
    <property type="entry name" value="PRK12849.1"/>
    <property type="match status" value="1"/>
</dbReference>
<dbReference type="NCBIfam" id="NF009488">
    <property type="entry name" value="PRK12850.1"/>
    <property type="match status" value="1"/>
</dbReference>
<dbReference type="NCBIfam" id="NF009489">
    <property type="entry name" value="PRK12851.1"/>
    <property type="match status" value="1"/>
</dbReference>
<dbReference type="PANTHER" id="PTHR45633">
    <property type="entry name" value="60 KDA HEAT SHOCK PROTEIN, MITOCHONDRIAL"/>
    <property type="match status" value="1"/>
</dbReference>
<dbReference type="Pfam" id="PF00118">
    <property type="entry name" value="Cpn60_TCP1"/>
    <property type="match status" value="1"/>
</dbReference>
<dbReference type="PRINTS" id="PR00298">
    <property type="entry name" value="CHAPERONIN60"/>
</dbReference>
<dbReference type="SUPFAM" id="SSF52029">
    <property type="entry name" value="GroEL apical domain-like"/>
    <property type="match status" value="1"/>
</dbReference>
<dbReference type="SUPFAM" id="SSF48592">
    <property type="entry name" value="GroEL equatorial domain-like"/>
    <property type="match status" value="1"/>
</dbReference>
<dbReference type="SUPFAM" id="SSF54849">
    <property type="entry name" value="GroEL-intermediate domain like"/>
    <property type="match status" value="1"/>
</dbReference>
<dbReference type="PROSITE" id="PS00296">
    <property type="entry name" value="CHAPERONINS_CPN60"/>
    <property type="match status" value="1"/>
</dbReference>
<gene>
    <name evidence="1" type="primary">groEL2</name>
    <name type="synonym">cpn60-2</name>
    <name evidence="1" type="synonym">groL2</name>
</gene>
<accession>Q9L691</accession>
<evidence type="ECO:0000255" key="1">
    <source>
        <dbReference type="HAMAP-Rule" id="MF_00600"/>
    </source>
</evidence>
<proteinExistence type="inferred from homology"/>
<reference key="1">
    <citation type="submission" date="2000-02" db="EMBL/GenBank/DDBJ databases">
        <title>Sequence of the cpn2 operon of Rhizobium leguminosarum.</title>
        <authorList>
            <person name="Rodriguez-Quinones F."/>
            <person name="Lund P.A."/>
        </authorList>
    </citation>
    <scope>NUCLEOTIDE SEQUENCE [GENOMIC DNA]</scope>
</reference>
<protein>
    <recommendedName>
        <fullName evidence="1">Chaperonin GroEL 2</fullName>
        <ecNumber evidence="1">5.6.1.7</ecNumber>
    </recommendedName>
    <alternativeName>
        <fullName evidence="1">60 kDa chaperonin 2</fullName>
    </alternativeName>
    <alternativeName>
        <fullName evidence="1">Chaperonin-60 2</fullName>
        <shortName evidence="1">Cpn60 2</shortName>
    </alternativeName>
</protein>
<name>CH602_RHILE</name>
<comment type="function">
    <text evidence="1">Together with its co-chaperonin GroES, plays an essential role in assisting protein folding. The GroEL-GroES system forms a nano-cage that allows encapsulation of the non-native substrate proteins and provides a physical environment optimized to promote and accelerate protein folding.</text>
</comment>
<comment type="catalytic activity">
    <reaction evidence="1">
        <text>ATP + H2O + a folded polypeptide = ADP + phosphate + an unfolded polypeptide.</text>
        <dbReference type="EC" id="5.6.1.7"/>
    </reaction>
</comment>
<comment type="subunit">
    <text evidence="1">Forms a cylinder of 14 subunits composed of two heptameric rings stacked back-to-back. Interacts with the co-chaperonin GroES.</text>
</comment>
<comment type="subcellular location">
    <subcellularLocation>
        <location evidence="1">Cytoplasm</location>
    </subcellularLocation>
</comment>
<comment type="similarity">
    <text evidence="1">Belongs to the chaperonin (HSP60) family.</text>
</comment>
<organism>
    <name type="scientific">Rhizobium leguminosarum</name>
    <dbReference type="NCBI Taxonomy" id="384"/>
    <lineage>
        <taxon>Bacteria</taxon>
        <taxon>Pseudomonadati</taxon>
        <taxon>Pseudomonadota</taxon>
        <taxon>Alphaproteobacteria</taxon>
        <taxon>Hyphomicrobiales</taxon>
        <taxon>Rhizobiaceae</taxon>
        <taxon>Rhizobium/Agrobacterium group</taxon>
        <taxon>Rhizobium</taxon>
    </lineage>
</organism>
<keyword id="KW-0067">ATP-binding</keyword>
<keyword id="KW-0143">Chaperone</keyword>
<keyword id="KW-0963">Cytoplasm</keyword>
<keyword id="KW-0413">Isomerase</keyword>
<keyword id="KW-0547">Nucleotide-binding</keyword>